<organism>
    <name type="scientific">Yersinia pseudotuberculosis serotype O:1b (strain IP 31758)</name>
    <dbReference type="NCBI Taxonomy" id="349747"/>
    <lineage>
        <taxon>Bacteria</taxon>
        <taxon>Pseudomonadati</taxon>
        <taxon>Pseudomonadota</taxon>
        <taxon>Gammaproteobacteria</taxon>
        <taxon>Enterobacterales</taxon>
        <taxon>Yersiniaceae</taxon>
        <taxon>Yersinia</taxon>
    </lineage>
</organism>
<gene>
    <name evidence="1" type="primary">purA</name>
    <name type="ordered locus">YpsIP31758_3648</name>
</gene>
<keyword id="KW-0963">Cytoplasm</keyword>
<keyword id="KW-0342">GTP-binding</keyword>
<keyword id="KW-0436">Ligase</keyword>
<keyword id="KW-0460">Magnesium</keyword>
<keyword id="KW-0479">Metal-binding</keyword>
<keyword id="KW-0547">Nucleotide-binding</keyword>
<keyword id="KW-0658">Purine biosynthesis</keyword>
<evidence type="ECO:0000255" key="1">
    <source>
        <dbReference type="HAMAP-Rule" id="MF_00011"/>
    </source>
</evidence>
<sequence>MGKNVVVLGTQWGDEGKGKVVDLLTERAKYVVRYQGGHNAGHTLVINGEKTVLHLIPSGILRENVISIIGNGVVLAPDALMKEMTELEARGVPVRERLLLSEACPLILPYHVALDNAREKARGAKAIGTTGRGIGPAYEDKVARRGLRVSDLFNKETFAIKLKEIVEYHNFQLVHYYKEAAVDYQKVLDDVLAIADILTAMVVDVSELLDNARKQGELIMFEGAQGTLLDIDHGTYPYVTSSNTTAGGVATGSGLGPRYVDYVLGIVKAYSTRVGAGPFPTELNDETGEFLRKQGNEYGATTGRSRRTGWLDIVAVRRAVQINSLSGFCMTKLDVLDGLKEVKLCIGYRMPDGREVDTTPLAAEGWEGIEPIYETMPGWSETTFGVKEHSKLPQAALNYIQRVEELTGVPIDIISTGPDRDETMILRDPFDA</sequence>
<comment type="function">
    <text evidence="1">Plays an important role in the de novo pathway of purine nucleotide biosynthesis. Catalyzes the first committed step in the biosynthesis of AMP from IMP.</text>
</comment>
<comment type="catalytic activity">
    <reaction evidence="1">
        <text>IMP + L-aspartate + GTP = N(6)-(1,2-dicarboxyethyl)-AMP + GDP + phosphate + 2 H(+)</text>
        <dbReference type="Rhea" id="RHEA:15753"/>
        <dbReference type="ChEBI" id="CHEBI:15378"/>
        <dbReference type="ChEBI" id="CHEBI:29991"/>
        <dbReference type="ChEBI" id="CHEBI:37565"/>
        <dbReference type="ChEBI" id="CHEBI:43474"/>
        <dbReference type="ChEBI" id="CHEBI:57567"/>
        <dbReference type="ChEBI" id="CHEBI:58053"/>
        <dbReference type="ChEBI" id="CHEBI:58189"/>
        <dbReference type="EC" id="6.3.4.4"/>
    </reaction>
</comment>
<comment type="cofactor">
    <cofactor evidence="1">
        <name>Mg(2+)</name>
        <dbReference type="ChEBI" id="CHEBI:18420"/>
    </cofactor>
    <text evidence="1">Binds 1 Mg(2+) ion per subunit.</text>
</comment>
<comment type="pathway">
    <text evidence="1">Purine metabolism; AMP biosynthesis via de novo pathway; AMP from IMP: step 1/2.</text>
</comment>
<comment type="subunit">
    <text evidence="1">Homodimer.</text>
</comment>
<comment type="subcellular location">
    <subcellularLocation>
        <location evidence="1">Cytoplasm</location>
    </subcellularLocation>
</comment>
<comment type="similarity">
    <text evidence="1">Belongs to the adenylosuccinate synthetase family.</text>
</comment>
<protein>
    <recommendedName>
        <fullName evidence="1">Adenylosuccinate synthetase</fullName>
        <shortName evidence="1">AMPSase</shortName>
        <shortName evidence="1">AdSS</shortName>
        <ecNumber evidence="1">6.3.4.4</ecNumber>
    </recommendedName>
    <alternativeName>
        <fullName evidence="1">IMP--aspartate ligase</fullName>
    </alternativeName>
</protein>
<name>PURA_YERP3</name>
<dbReference type="EC" id="6.3.4.4" evidence="1"/>
<dbReference type="EMBL" id="CP000720">
    <property type="protein sequence ID" value="ABS46775.1"/>
    <property type="molecule type" value="Genomic_DNA"/>
</dbReference>
<dbReference type="RefSeq" id="WP_012105751.1">
    <property type="nucleotide sequence ID" value="NC_009708.1"/>
</dbReference>
<dbReference type="SMR" id="A7FMX4"/>
<dbReference type="KEGG" id="ypi:YpsIP31758_3648"/>
<dbReference type="HOGENOM" id="CLU_029848_0_0_6"/>
<dbReference type="UniPathway" id="UPA00075">
    <property type="reaction ID" value="UER00335"/>
</dbReference>
<dbReference type="Proteomes" id="UP000002412">
    <property type="component" value="Chromosome"/>
</dbReference>
<dbReference type="GO" id="GO:0005737">
    <property type="term" value="C:cytoplasm"/>
    <property type="evidence" value="ECO:0007669"/>
    <property type="project" value="UniProtKB-SubCell"/>
</dbReference>
<dbReference type="GO" id="GO:0004019">
    <property type="term" value="F:adenylosuccinate synthase activity"/>
    <property type="evidence" value="ECO:0007669"/>
    <property type="project" value="UniProtKB-UniRule"/>
</dbReference>
<dbReference type="GO" id="GO:0005525">
    <property type="term" value="F:GTP binding"/>
    <property type="evidence" value="ECO:0007669"/>
    <property type="project" value="UniProtKB-UniRule"/>
</dbReference>
<dbReference type="GO" id="GO:0000287">
    <property type="term" value="F:magnesium ion binding"/>
    <property type="evidence" value="ECO:0007669"/>
    <property type="project" value="UniProtKB-UniRule"/>
</dbReference>
<dbReference type="GO" id="GO:0044208">
    <property type="term" value="P:'de novo' AMP biosynthetic process"/>
    <property type="evidence" value="ECO:0007669"/>
    <property type="project" value="UniProtKB-UniRule"/>
</dbReference>
<dbReference type="GO" id="GO:0046040">
    <property type="term" value="P:IMP metabolic process"/>
    <property type="evidence" value="ECO:0007669"/>
    <property type="project" value="TreeGrafter"/>
</dbReference>
<dbReference type="CDD" id="cd03108">
    <property type="entry name" value="AdSS"/>
    <property type="match status" value="1"/>
</dbReference>
<dbReference type="FunFam" id="1.10.300.10:FF:000001">
    <property type="entry name" value="Adenylosuccinate synthetase"/>
    <property type="match status" value="1"/>
</dbReference>
<dbReference type="FunFam" id="3.90.170.10:FF:000001">
    <property type="entry name" value="Adenylosuccinate synthetase"/>
    <property type="match status" value="1"/>
</dbReference>
<dbReference type="Gene3D" id="3.40.440.10">
    <property type="entry name" value="Adenylosuccinate Synthetase, subunit A, domain 1"/>
    <property type="match status" value="1"/>
</dbReference>
<dbReference type="Gene3D" id="1.10.300.10">
    <property type="entry name" value="Adenylosuccinate Synthetase, subunit A, domain 2"/>
    <property type="match status" value="1"/>
</dbReference>
<dbReference type="Gene3D" id="3.90.170.10">
    <property type="entry name" value="Adenylosuccinate Synthetase, subunit A, domain 3"/>
    <property type="match status" value="1"/>
</dbReference>
<dbReference type="HAMAP" id="MF_00011">
    <property type="entry name" value="Adenylosucc_synth"/>
    <property type="match status" value="1"/>
</dbReference>
<dbReference type="InterPro" id="IPR018220">
    <property type="entry name" value="Adenylosuccin_syn_GTP-bd"/>
</dbReference>
<dbReference type="InterPro" id="IPR033128">
    <property type="entry name" value="Adenylosuccin_syn_Lys_AS"/>
</dbReference>
<dbReference type="InterPro" id="IPR042109">
    <property type="entry name" value="Adenylosuccinate_synth_dom1"/>
</dbReference>
<dbReference type="InterPro" id="IPR042110">
    <property type="entry name" value="Adenylosuccinate_synth_dom2"/>
</dbReference>
<dbReference type="InterPro" id="IPR042111">
    <property type="entry name" value="Adenylosuccinate_synth_dom3"/>
</dbReference>
<dbReference type="InterPro" id="IPR001114">
    <property type="entry name" value="Adenylosuccinate_synthetase"/>
</dbReference>
<dbReference type="InterPro" id="IPR027417">
    <property type="entry name" value="P-loop_NTPase"/>
</dbReference>
<dbReference type="NCBIfam" id="NF002223">
    <property type="entry name" value="PRK01117.1"/>
    <property type="match status" value="1"/>
</dbReference>
<dbReference type="NCBIfam" id="TIGR00184">
    <property type="entry name" value="purA"/>
    <property type="match status" value="1"/>
</dbReference>
<dbReference type="PANTHER" id="PTHR11846">
    <property type="entry name" value="ADENYLOSUCCINATE SYNTHETASE"/>
    <property type="match status" value="1"/>
</dbReference>
<dbReference type="PANTHER" id="PTHR11846:SF0">
    <property type="entry name" value="ADENYLOSUCCINATE SYNTHETASE"/>
    <property type="match status" value="1"/>
</dbReference>
<dbReference type="Pfam" id="PF00709">
    <property type="entry name" value="Adenylsucc_synt"/>
    <property type="match status" value="1"/>
</dbReference>
<dbReference type="SMART" id="SM00788">
    <property type="entry name" value="Adenylsucc_synt"/>
    <property type="match status" value="1"/>
</dbReference>
<dbReference type="SUPFAM" id="SSF52540">
    <property type="entry name" value="P-loop containing nucleoside triphosphate hydrolases"/>
    <property type="match status" value="1"/>
</dbReference>
<dbReference type="PROSITE" id="PS01266">
    <property type="entry name" value="ADENYLOSUCCIN_SYN_1"/>
    <property type="match status" value="1"/>
</dbReference>
<dbReference type="PROSITE" id="PS00513">
    <property type="entry name" value="ADENYLOSUCCIN_SYN_2"/>
    <property type="match status" value="1"/>
</dbReference>
<proteinExistence type="inferred from homology"/>
<feature type="chain" id="PRO_1000057093" description="Adenylosuccinate synthetase">
    <location>
        <begin position="1"/>
        <end position="432"/>
    </location>
</feature>
<feature type="active site" description="Proton acceptor" evidence="1">
    <location>
        <position position="14"/>
    </location>
</feature>
<feature type="active site" description="Proton donor" evidence="1">
    <location>
        <position position="42"/>
    </location>
</feature>
<feature type="binding site" evidence="1">
    <location>
        <begin position="13"/>
        <end position="19"/>
    </location>
    <ligand>
        <name>GTP</name>
        <dbReference type="ChEBI" id="CHEBI:37565"/>
    </ligand>
</feature>
<feature type="binding site" description="in other chain" evidence="1">
    <location>
        <begin position="14"/>
        <end position="17"/>
    </location>
    <ligand>
        <name>IMP</name>
        <dbReference type="ChEBI" id="CHEBI:58053"/>
        <note>ligand shared between dimeric partners</note>
    </ligand>
</feature>
<feature type="binding site" evidence="1">
    <location>
        <position position="14"/>
    </location>
    <ligand>
        <name>Mg(2+)</name>
        <dbReference type="ChEBI" id="CHEBI:18420"/>
    </ligand>
</feature>
<feature type="binding site" description="in other chain" evidence="1">
    <location>
        <begin position="39"/>
        <end position="42"/>
    </location>
    <ligand>
        <name>IMP</name>
        <dbReference type="ChEBI" id="CHEBI:58053"/>
        <note>ligand shared between dimeric partners</note>
    </ligand>
</feature>
<feature type="binding site" evidence="1">
    <location>
        <begin position="41"/>
        <end position="43"/>
    </location>
    <ligand>
        <name>GTP</name>
        <dbReference type="ChEBI" id="CHEBI:37565"/>
    </ligand>
</feature>
<feature type="binding site" evidence="1">
    <location>
        <position position="41"/>
    </location>
    <ligand>
        <name>Mg(2+)</name>
        <dbReference type="ChEBI" id="CHEBI:18420"/>
    </ligand>
</feature>
<feature type="binding site" description="in other chain" evidence="1">
    <location>
        <position position="130"/>
    </location>
    <ligand>
        <name>IMP</name>
        <dbReference type="ChEBI" id="CHEBI:58053"/>
        <note>ligand shared between dimeric partners</note>
    </ligand>
</feature>
<feature type="binding site" evidence="1">
    <location>
        <position position="144"/>
    </location>
    <ligand>
        <name>IMP</name>
        <dbReference type="ChEBI" id="CHEBI:58053"/>
        <note>ligand shared between dimeric partners</note>
    </ligand>
</feature>
<feature type="binding site" description="in other chain" evidence="1">
    <location>
        <position position="225"/>
    </location>
    <ligand>
        <name>IMP</name>
        <dbReference type="ChEBI" id="CHEBI:58053"/>
        <note>ligand shared between dimeric partners</note>
    </ligand>
</feature>
<feature type="binding site" description="in other chain" evidence="1">
    <location>
        <position position="240"/>
    </location>
    <ligand>
        <name>IMP</name>
        <dbReference type="ChEBI" id="CHEBI:58053"/>
        <note>ligand shared between dimeric partners</note>
    </ligand>
</feature>
<feature type="binding site" evidence="1">
    <location>
        <begin position="300"/>
        <end position="306"/>
    </location>
    <ligand>
        <name>substrate</name>
    </ligand>
</feature>
<feature type="binding site" description="in other chain" evidence="1">
    <location>
        <position position="304"/>
    </location>
    <ligand>
        <name>IMP</name>
        <dbReference type="ChEBI" id="CHEBI:58053"/>
        <note>ligand shared between dimeric partners</note>
    </ligand>
</feature>
<feature type="binding site" evidence="1">
    <location>
        <position position="306"/>
    </location>
    <ligand>
        <name>GTP</name>
        <dbReference type="ChEBI" id="CHEBI:37565"/>
    </ligand>
</feature>
<feature type="binding site" evidence="1">
    <location>
        <begin position="332"/>
        <end position="334"/>
    </location>
    <ligand>
        <name>GTP</name>
        <dbReference type="ChEBI" id="CHEBI:37565"/>
    </ligand>
</feature>
<feature type="binding site" evidence="1">
    <location>
        <begin position="415"/>
        <end position="417"/>
    </location>
    <ligand>
        <name>GTP</name>
        <dbReference type="ChEBI" id="CHEBI:37565"/>
    </ligand>
</feature>
<reference key="1">
    <citation type="journal article" date="2007" name="PLoS Genet.">
        <title>The complete genome sequence of Yersinia pseudotuberculosis IP31758, the causative agent of Far East scarlet-like fever.</title>
        <authorList>
            <person name="Eppinger M."/>
            <person name="Rosovitz M.J."/>
            <person name="Fricke W.F."/>
            <person name="Rasko D.A."/>
            <person name="Kokorina G."/>
            <person name="Fayolle C."/>
            <person name="Lindler L.E."/>
            <person name="Carniel E."/>
            <person name="Ravel J."/>
        </authorList>
    </citation>
    <scope>NUCLEOTIDE SEQUENCE [LARGE SCALE GENOMIC DNA]</scope>
    <source>
        <strain>IP 31758</strain>
    </source>
</reference>
<accession>A7FMX4</accession>